<accession>Q44057</accession>
<feature type="chain" id="PRO_0000416830" description="Aminoglycoside N(6')-acetyltransferase type 1">
    <location>
        <begin position="1"/>
        <end position="145"/>
    </location>
</feature>
<feature type="domain" description="N-acetyltransferase" evidence="2">
    <location>
        <begin position="1"/>
        <end position="145"/>
    </location>
</feature>
<feature type="binding site" evidence="1">
    <location>
        <position position="22"/>
    </location>
    <ligand>
        <name>substrate</name>
    </ligand>
</feature>
<feature type="binding site" evidence="1">
    <location>
        <position position="65"/>
    </location>
    <ligand>
        <name>substrate</name>
    </ligand>
</feature>
<feature type="binding site" evidence="1">
    <location>
        <position position="78"/>
    </location>
    <ligand>
        <name>substrate</name>
    </ligand>
</feature>
<feature type="binding site" evidence="1">
    <location>
        <begin position="80"/>
        <end position="82"/>
    </location>
    <ligand>
        <name>acetyl-CoA</name>
        <dbReference type="ChEBI" id="CHEBI:57288"/>
    </ligand>
</feature>
<feature type="binding site" evidence="1">
    <location>
        <position position="114"/>
    </location>
    <ligand>
        <name>substrate</name>
    </ligand>
</feature>
<feature type="binding site" evidence="1">
    <location>
        <position position="119"/>
    </location>
    <ligand>
        <name>acetyl-CoA</name>
        <dbReference type="ChEBI" id="CHEBI:57288"/>
    </ligand>
</feature>
<feature type="binding site" evidence="1">
    <location>
        <position position="135"/>
    </location>
    <ligand>
        <name>substrate</name>
    </ligand>
</feature>
<feature type="strand" evidence="7">
    <location>
        <begin position="1"/>
        <end position="5"/>
    </location>
</feature>
<feature type="helix" evidence="7">
    <location>
        <begin position="8"/>
        <end position="10"/>
    </location>
</feature>
<feature type="helix" evidence="7">
    <location>
        <begin position="11"/>
        <end position="21"/>
    </location>
</feature>
<feature type="helix" evidence="7">
    <location>
        <begin position="26"/>
        <end position="37"/>
    </location>
</feature>
<feature type="strand" evidence="7">
    <location>
        <begin position="42"/>
        <end position="49"/>
    </location>
</feature>
<feature type="strand" evidence="7">
    <location>
        <begin position="52"/>
        <end position="62"/>
    </location>
</feature>
<feature type="strand" evidence="7">
    <location>
        <begin position="70"/>
        <end position="82"/>
    </location>
</feature>
<feature type="helix" evidence="7">
    <location>
        <begin position="84"/>
        <end position="86"/>
    </location>
</feature>
<feature type="helix" evidence="7">
    <location>
        <begin position="91"/>
        <end position="105"/>
    </location>
</feature>
<feature type="strand" evidence="7">
    <location>
        <begin position="110"/>
        <end position="116"/>
    </location>
</feature>
<feature type="helix" evidence="7">
    <location>
        <begin position="120"/>
        <end position="128"/>
    </location>
</feature>
<feature type="strand" evidence="7">
    <location>
        <begin position="132"/>
        <end position="143"/>
    </location>
</feature>
<name>AAC6_ACIHA</name>
<evidence type="ECO:0000250" key="1">
    <source>
        <dbReference type="UniProtKB" id="Q9R381"/>
    </source>
</evidence>
<evidence type="ECO:0000255" key="2">
    <source>
        <dbReference type="PROSITE-ProRule" id="PRU00532"/>
    </source>
</evidence>
<evidence type="ECO:0000269" key="3">
    <source>
    </source>
</evidence>
<evidence type="ECO:0000303" key="4">
    <source>
    </source>
</evidence>
<evidence type="ECO:0000305" key="5"/>
<evidence type="ECO:0000312" key="6">
    <source>
        <dbReference type="EMBL" id="AAA21889.1"/>
    </source>
</evidence>
<evidence type="ECO:0007829" key="7">
    <source>
        <dbReference type="PDB" id="4EVY"/>
    </source>
</evidence>
<organism>
    <name type="scientific">Acinetobacter haemolyticus</name>
    <dbReference type="NCBI Taxonomy" id="29430"/>
    <lineage>
        <taxon>Bacteria</taxon>
        <taxon>Pseudomonadati</taxon>
        <taxon>Pseudomonadota</taxon>
        <taxon>Gammaproteobacteria</taxon>
        <taxon>Moraxellales</taxon>
        <taxon>Moraxellaceae</taxon>
        <taxon>Acinetobacter</taxon>
    </lineage>
</organism>
<dbReference type="EC" id="2.3.1.82" evidence="3"/>
<dbReference type="EMBL" id="L09246">
    <property type="protein sequence ID" value="AAA21889.1"/>
    <property type="molecule type" value="Genomic_DNA"/>
</dbReference>
<dbReference type="PIR" id="I39502">
    <property type="entry name" value="I39502"/>
</dbReference>
<dbReference type="RefSeq" id="WP_005081764.1">
    <property type="nucleotide sequence ID" value="NZ_UFRR01000003.1"/>
</dbReference>
<dbReference type="PDB" id="4EVY">
    <property type="method" value="X-ray"/>
    <property type="resolution" value="1.77 A"/>
    <property type="chains" value="A/B=1-145"/>
</dbReference>
<dbReference type="PDB" id="4F0Y">
    <property type="method" value="X-ray"/>
    <property type="resolution" value="2.56 A"/>
    <property type="chains" value="A/B=1-145"/>
</dbReference>
<dbReference type="PDBsum" id="4EVY"/>
<dbReference type="PDBsum" id="4F0Y"/>
<dbReference type="SMR" id="Q44057"/>
<dbReference type="CARD" id="ARO:3002554">
    <property type="molecule name" value="AAC(6')-Ig"/>
    <property type="mechanism identifier" value="ARO:0001004"/>
    <property type="mechanism name" value="antibiotic inactivation"/>
</dbReference>
<dbReference type="KEGG" id="ag:AAA21889"/>
<dbReference type="eggNOG" id="COG0456">
    <property type="taxonomic scope" value="Bacteria"/>
</dbReference>
<dbReference type="BRENDA" id="2.3.1.82">
    <property type="organism ID" value="102"/>
</dbReference>
<dbReference type="EvolutionaryTrace" id="Q44057"/>
<dbReference type="GO" id="GO:0047663">
    <property type="term" value="F:aminoglycoside 6'-N-acetyltransferase activity"/>
    <property type="evidence" value="ECO:0000314"/>
    <property type="project" value="UniProtKB"/>
</dbReference>
<dbReference type="GO" id="GO:0046677">
    <property type="term" value="P:response to antibiotic"/>
    <property type="evidence" value="ECO:0000314"/>
    <property type="project" value="UniProtKB"/>
</dbReference>
<dbReference type="CDD" id="cd04301">
    <property type="entry name" value="NAT_SF"/>
    <property type="match status" value="1"/>
</dbReference>
<dbReference type="FunFam" id="3.40.630.30:FF:000071">
    <property type="entry name" value="Acetyltransf_1"/>
    <property type="match status" value="1"/>
</dbReference>
<dbReference type="Gene3D" id="3.40.630.30">
    <property type="match status" value="1"/>
</dbReference>
<dbReference type="InterPro" id="IPR016181">
    <property type="entry name" value="Acyl_CoA_acyltransferase"/>
</dbReference>
<dbReference type="InterPro" id="IPR024170">
    <property type="entry name" value="Aminoglycoside_N6-AcTrfrase"/>
</dbReference>
<dbReference type="InterPro" id="IPR000182">
    <property type="entry name" value="GNAT_dom"/>
</dbReference>
<dbReference type="InterPro" id="IPR050680">
    <property type="entry name" value="YpeA/RimI_acetyltransf"/>
</dbReference>
<dbReference type="NCBIfam" id="NF000224">
    <property type="entry name" value="AAC_6p_Acine"/>
    <property type="match status" value="1"/>
</dbReference>
<dbReference type="NCBIfam" id="NF043067">
    <property type="entry name" value="AAC_6p_group_E"/>
    <property type="match status" value="1"/>
</dbReference>
<dbReference type="PANTHER" id="PTHR43420">
    <property type="entry name" value="ACETYLTRANSFERASE"/>
    <property type="match status" value="1"/>
</dbReference>
<dbReference type="PANTHER" id="PTHR43420:SF51">
    <property type="entry name" value="PEPTIDYL-LYSINE N-ACETYLTRANSFERASE YIAC"/>
    <property type="match status" value="1"/>
</dbReference>
<dbReference type="Pfam" id="PF00583">
    <property type="entry name" value="Acetyltransf_1"/>
    <property type="match status" value="1"/>
</dbReference>
<dbReference type="PIRSF" id="PIRSF000452">
    <property type="entry name" value="6-N-acetyltransf"/>
    <property type="match status" value="1"/>
</dbReference>
<dbReference type="SUPFAM" id="SSF55729">
    <property type="entry name" value="Acyl-CoA N-acyltransferases (Nat)"/>
    <property type="match status" value="1"/>
</dbReference>
<dbReference type="PROSITE" id="PS51186">
    <property type="entry name" value="GNAT"/>
    <property type="match status" value="1"/>
</dbReference>
<keyword id="KW-0002">3D-structure</keyword>
<keyword id="KW-0012">Acyltransferase</keyword>
<keyword id="KW-0046">Antibiotic resistance</keyword>
<keyword id="KW-0808">Transferase</keyword>
<protein>
    <recommendedName>
        <fullName evidence="4">Aminoglycoside N(6')-acetyltransferase type 1</fullName>
        <ecNumber evidence="3">2.3.1.82</ecNumber>
    </recommendedName>
    <alternativeName>
        <fullName evidence="4">AAC(6')-Ig</fullName>
    </alternativeName>
    <alternativeName>
        <fullName evidence="4">Aminoglycoside resistance protein</fullName>
    </alternativeName>
</protein>
<reference evidence="5 6" key="1">
    <citation type="journal article" date="1993" name="Antimicrob. Agents Chemother.">
        <title>Characterization of Acinetobacter haemolyticus aac(6')-Ig gene encoding an aminoglycoside 6'-N-acetyltransferase which modifies amikacin.</title>
        <authorList>
            <person name="Lambert T."/>
            <person name="Gerbaud G."/>
            <person name="Galimand M."/>
            <person name="Courvalin P."/>
        </authorList>
    </citation>
    <scope>NUCLEOTIDE SEQUENCE [GENOMIC DNA]</scope>
    <scope>FUNCTION</scope>
    <scope>CATALYTIC ACTIVITY</scope>
    <scope>SUBSTRATE SPECIFICITY</scope>
    <source>
        <strain evidence="6">BM2685</strain>
    </source>
</reference>
<sequence length="145" mass="16448">MNIKPASEASLKDWLELRNKLWSDSEASHLQEMHQLLAEKYALQLLAYSDHQAIAMLEASIRFEYVNGTETSPVGFLEGIYVLPAHRRSGVATMLIRQAEVWAKQFSCTEFASDAALDNVISHAMHRSLGFQETEKVVYFSKKID</sequence>
<comment type="function">
    <text evidence="3">Catalyzes the transfer of an acetyl group from acetyl-CoA to the 6'-amino group of aminoglycoside molecules conferring resistance to antibiotics containing the purpurosamine ring including amikacin, kanamycin, tobramycin and netilmicin.</text>
</comment>
<comment type="catalytic activity">
    <reaction evidence="3">
        <text>kanamycin B + acetyl-CoA = N(6')-acetylkanamycin B + CoA + H(+)</text>
        <dbReference type="Rhea" id="RHEA:16449"/>
        <dbReference type="ChEBI" id="CHEBI:15378"/>
        <dbReference type="ChEBI" id="CHEBI:57287"/>
        <dbReference type="ChEBI" id="CHEBI:57288"/>
        <dbReference type="ChEBI" id="CHEBI:58390"/>
        <dbReference type="ChEBI" id="CHEBI:58549"/>
        <dbReference type="EC" id="2.3.1.82"/>
    </reaction>
</comment>
<comment type="subunit">
    <text evidence="1">Homodimer.</text>
</comment>
<proteinExistence type="evidence at protein level"/>